<keyword id="KW-0648">Protein biosynthesis</keyword>
<keyword id="KW-1185">Reference proteome</keyword>
<keyword id="KW-0808">Transferase</keyword>
<name>FMT_SORC5</name>
<dbReference type="EC" id="2.1.2.9" evidence="1"/>
<dbReference type="EMBL" id="AM746676">
    <property type="protein sequence ID" value="CAN95168.1"/>
    <property type="molecule type" value="Genomic_DNA"/>
</dbReference>
<dbReference type="RefSeq" id="WP_012237637.1">
    <property type="nucleotide sequence ID" value="NC_010162.1"/>
</dbReference>
<dbReference type="SMR" id="A9FL08"/>
<dbReference type="STRING" id="448385.sce5005"/>
<dbReference type="KEGG" id="scl:sce5005"/>
<dbReference type="eggNOG" id="COG0223">
    <property type="taxonomic scope" value="Bacteria"/>
</dbReference>
<dbReference type="HOGENOM" id="CLU_033347_2_0_7"/>
<dbReference type="OrthoDB" id="9802815at2"/>
<dbReference type="BioCyc" id="SCEL448385:SCE_RS25685-MONOMER"/>
<dbReference type="Proteomes" id="UP000002139">
    <property type="component" value="Chromosome"/>
</dbReference>
<dbReference type="GO" id="GO:0005829">
    <property type="term" value="C:cytosol"/>
    <property type="evidence" value="ECO:0007669"/>
    <property type="project" value="TreeGrafter"/>
</dbReference>
<dbReference type="GO" id="GO:0004479">
    <property type="term" value="F:methionyl-tRNA formyltransferase activity"/>
    <property type="evidence" value="ECO:0007669"/>
    <property type="project" value="UniProtKB-UniRule"/>
</dbReference>
<dbReference type="CDD" id="cd08646">
    <property type="entry name" value="FMT_core_Met-tRNA-FMT_N"/>
    <property type="match status" value="1"/>
</dbReference>
<dbReference type="CDD" id="cd08704">
    <property type="entry name" value="Met_tRNA_FMT_C"/>
    <property type="match status" value="1"/>
</dbReference>
<dbReference type="Gene3D" id="3.40.50.12230">
    <property type="match status" value="1"/>
</dbReference>
<dbReference type="HAMAP" id="MF_00182">
    <property type="entry name" value="Formyl_trans"/>
    <property type="match status" value="1"/>
</dbReference>
<dbReference type="InterPro" id="IPR005794">
    <property type="entry name" value="Fmt"/>
</dbReference>
<dbReference type="InterPro" id="IPR005793">
    <property type="entry name" value="Formyl_trans_C"/>
</dbReference>
<dbReference type="InterPro" id="IPR002376">
    <property type="entry name" value="Formyl_transf_N"/>
</dbReference>
<dbReference type="InterPro" id="IPR036477">
    <property type="entry name" value="Formyl_transf_N_sf"/>
</dbReference>
<dbReference type="InterPro" id="IPR011034">
    <property type="entry name" value="Formyl_transferase-like_C_sf"/>
</dbReference>
<dbReference type="InterPro" id="IPR001555">
    <property type="entry name" value="GART_AS"/>
</dbReference>
<dbReference type="InterPro" id="IPR044135">
    <property type="entry name" value="Met-tRNA-FMT_C"/>
</dbReference>
<dbReference type="InterPro" id="IPR041711">
    <property type="entry name" value="Met-tRNA-FMT_N"/>
</dbReference>
<dbReference type="NCBIfam" id="TIGR00460">
    <property type="entry name" value="fmt"/>
    <property type="match status" value="1"/>
</dbReference>
<dbReference type="PANTHER" id="PTHR11138">
    <property type="entry name" value="METHIONYL-TRNA FORMYLTRANSFERASE"/>
    <property type="match status" value="1"/>
</dbReference>
<dbReference type="PANTHER" id="PTHR11138:SF5">
    <property type="entry name" value="METHIONYL-TRNA FORMYLTRANSFERASE, MITOCHONDRIAL"/>
    <property type="match status" value="1"/>
</dbReference>
<dbReference type="Pfam" id="PF02911">
    <property type="entry name" value="Formyl_trans_C"/>
    <property type="match status" value="1"/>
</dbReference>
<dbReference type="Pfam" id="PF00551">
    <property type="entry name" value="Formyl_trans_N"/>
    <property type="match status" value="1"/>
</dbReference>
<dbReference type="SUPFAM" id="SSF50486">
    <property type="entry name" value="FMT C-terminal domain-like"/>
    <property type="match status" value="1"/>
</dbReference>
<dbReference type="SUPFAM" id="SSF53328">
    <property type="entry name" value="Formyltransferase"/>
    <property type="match status" value="1"/>
</dbReference>
<dbReference type="PROSITE" id="PS00373">
    <property type="entry name" value="GART"/>
    <property type="match status" value="1"/>
</dbReference>
<reference key="1">
    <citation type="journal article" date="2007" name="Nat. Biotechnol.">
        <title>Complete genome sequence of the myxobacterium Sorangium cellulosum.</title>
        <authorList>
            <person name="Schneiker S."/>
            <person name="Perlova O."/>
            <person name="Kaiser O."/>
            <person name="Gerth K."/>
            <person name="Alici A."/>
            <person name="Altmeyer M.O."/>
            <person name="Bartels D."/>
            <person name="Bekel T."/>
            <person name="Beyer S."/>
            <person name="Bode E."/>
            <person name="Bode H.B."/>
            <person name="Bolten C.J."/>
            <person name="Choudhuri J.V."/>
            <person name="Doss S."/>
            <person name="Elnakady Y.A."/>
            <person name="Frank B."/>
            <person name="Gaigalat L."/>
            <person name="Goesmann A."/>
            <person name="Groeger C."/>
            <person name="Gross F."/>
            <person name="Jelsbak L."/>
            <person name="Jelsbak L."/>
            <person name="Kalinowski J."/>
            <person name="Kegler C."/>
            <person name="Knauber T."/>
            <person name="Konietzny S."/>
            <person name="Kopp M."/>
            <person name="Krause L."/>
            <person name="Krug D."/>
            <person name="Linke B."/>
            <person name="Mahmud T."/>
            <person name="Martinez-Arias R."/>
            <person name="McHardy A.C."/>
            <person name="Merai M."/>
            <person name="Meyer F."/>
            <person name="Mormann S."/>
            <person name="Munoz-Dorado J."/>
            <person name="Perez J."/>
            <person name="Pradella S."/>
            <person name="Rachid S."/>
            <person name="Raddatz G."/>
            <person name="Rosenau F."/>
            <person name="Rueckert C."/>
            <person name="Sasse F."/>
            <person name="Scharfe M."/>
            <person name="Schuster S.C."/>
            <person name="Suen G."/>
            <person name="Treuner-Lange A."/>
            <person name="Velicer G.J."/>
            <person name="Vorholter F.-J."/>
            <person name="Weissman K.J."/>
            <person name="Welch R.D."/>
            <person name="Wenzel S.C."/>
            <person name="Whitworth D.E."/>
            <person name="Wilhelm S."/>
            <person name="Wittmann C."/>
            <person name="Bloecker H."/>
            <person name="Puehler A."/>
            <person name="Mueller R."/>
        </authorList>
    </citation>
    <scope>NUCLEOTIDE SEQUENCE [LARGE SCALE GENOMIC DNA]</scope>
    <source>
        <strain>So ce56</strain>
    </source>
</reference>
<protein>
    <recommendedName>
        <fullName evidence="1">Methionyl-tRNA formyltransferase</fullName>
        <ecNumber evidence="1">2.1.2.9</ecNumber>
    </recommendedName>
</protein>
<accession>A9FL08</accession>
<sequence length="311" mass="32582">MRALFFGTPAIAVPSLEALASIADVVGVVCQPDRPAGRGLELKAPPVKVKALELGVPVLQPEKVRTPEFAAWVAGAGADVALVIAYGRILPKAVLEAPRRGCMNLHASILPRYRGAAPITWAIVGGETETGISLMQMDEGMDTGPVYAVRRTPIGPDTTADELAIDLGALAARVVREDLRRAVDGELAPTPQDHEAATHAALLKKEDGRIRWERSARQIHDHIRGMTSWPGAFTTIDGKALKVLAAHVESEADQGGAPPGTVVMAGRSVVVVACGAGAIQIVRAQVEGRKPLAAADLVAGRTLQAGMVLGR</sequence>
<gene>
    <name evidence="1" type="primary">fmt</name>
    <name type="ordered locus">sce5005</name>
</gene>
<comment type="function">
    <text evidence="1">Attaches a formyl group to the free amino group of methionyl-tRNA(fMet). The formyl group appears to play a dual role in the initiator identity of N-formylmethionyl-tRNA by promoting its recognition by IF2 and preventing the misappropriation of this tRNA by the elongation apparatus.</text>
</comment>
<comment type="catalytic activity">
    <reaction evidence="1">
        <text>L-methionyl-tRNA(fMet) + (6R)-10-formyltetrahydrofolate = N-formyl-L-methionyl-tRNA(fMet) + (6S)-5,6,7,8-tetrahydrofolate + H(+)</text>
        <dbReference type="Rhea" id="RHEA:24380"/>
        <dbReference type="Rhea" id="RHEA-COMP:9952"/>
        <dbReference type="Rhea" id="RHEA-COMP:9953"/>
        <dbReference type="ChEBI" id="CHEBI:15378"/>
        <dbReference type="ChEBI" id="CHEBI:57453"/>
        <dbReference type="ChEBI" id="CHEBI:78530"/>
        <dbReference type="ChEBI" id="CHEBI:78844"/>
        <dbReference type="ChEBI" id="CHEBI:195366"/>
        <dbReference type="EC" id="2.1.2.9"/>
    </reaction>
</comment>
<comment type="similarity">
    <text evidence="1">Belongs to the Fmt family.</text>
</comment>
<proteinExistence type="inferred from homology"/>
<evidence type="ECO:0000255" key="1">
    <source>
        <dbReference type="HAMAP-Rule" id="MF_00182"/>
    </source>
</evidence>
<organism>
    <name type="scientific">Sorangium cellulosum (strain So ce56)</name>
    <name type="common">Polyangium cellulosum (strain So ce56)</name>
    <dbReference type="NCBI Taxonomy" id="448385"/>
    <lineage>
        <taxon>Bacteria</taxon>
        <taxon>Pseudomonadati</taxon>
        <taxon>Myxococcota</taxon>
        <taxon>Polyangia</taxon>
        <taxon>Polyangiales</taxon>
        <taxon>Polyangiaceae</taxon>
        <taxon>Sorangium</taxon>
    </lineage>
</organism>
<feature type="chain" id="PRO_1000077324" description="Methionyl-tRNA formyltransferase">
    <location>
        <begin position="1"/>
        <end position="311"/>
    </location>
</feature>
<feature type="binding site" evidence="1">
    <location>
        <begin position="108"/>
        <end position="111"/>
    </location>
    <ligand>
        <name>(6S)-5,6,7,8-tetrahydrofolate</name>
        <dbReference type="ChEBI" id="CHEBI:57453"/>
    </ligand>
</feature>